<reference key="1">
    <citation type="journal article" date="2007" name="DNA Res.">
        <title>Complete genomic structure of the bloom-forming toxic cyanobacterium Microcystis aeruginosa NIES-843.</title>
        <authorList>
            <person name="Kaneko T."/>
            <person name="Nakajima N."/>
            <person name="Okamoto S."/>
            <person name="Suzuki I."/>
            <person name="Tanabe Y."/>
            <person name="Tamaoki M."/>
            <person name="Nakamura Y."/>
            <person name="Kasai F."/>
            <person name="Watanabe A."/>
            <person name="Kawashima K."/>
            <person name="Kishida Y."/>
            <person name="Ono A."/>
            <person name="Shimizu Y."/>
            <person name="Takahashi C."/>
            <person name="Minami C."/>
            <person name="Fujishiro T."/>
            <person name="Kohara M."/>
            <person name="Katoh M."/>
            <person name="Nakazaki N."/>
            <person name="Nakayama S."/>
            <person name="Yamada M."/>
            <person name="Tabata S."/>
            <person name="Watanabe M.M."/>
        </authorList>
    </citation>
    <scope>NUCLEOTIDE SEQUENCE [LARGE SCALE GENOMIC DNA]</scope>
    <source>
        <strain>NIES-843 / IAM M-247</strain>
    </source>
</reference>
<evidence type="ECO:0000255" key="1">
    <source>
        <dbReference type="HAMAP-Rule" id="MF_01353"/>
    </source>
</evidence>
<keyword id="KW-0472">Membrane</keyword>
<keyword id="KW-0520">NAD</keyword>
<keyword id="KW-0521">NADP</keyword>
<keyword id="KW-0618">Plastoquinone</keyword>
<keyword id="KW-0874">Quinone</keyword>
<keyword id="KW-0793">Thylakoid</keyword>
<keyword id="KW-1278">Translocase</keyword>
<keyword id="KW-0813">Transport</keyword>
<organism>
    <name type="scientific">Microcystis aeruginosa (strain NIES-843 / IAM M-2473)</name>
    <dbReference type="NCBI Taxonomy" id="449447"/>
    <lineage>
        <taxon>Bacteria</taxon>
        <taxon>Bacillati</taxon>
        <taxon>Cyanobacteriota</taxon>
        <taxon>Cyanophyceae</taxon>
        <taxon>Oscillatoriophycideae</taxon>
        <taxon>Chroococcales</taxon>
        <taxon>Microcystaceae</taxon>
        <taxon>Microcystis</taxon>
    </lineage>
</organism>
<feature type="chain" id="PRO_0000352217" description="NAD(P)H-quinone oxidoreductase subunit N">
    <location>
        <begin position="1"/>
        <end position="158"/>
    </location>
</feature>
<protein>
    <recommendedName>
        <fullName evidence="1">NAD(P)H-quinone oxidoreductase subunit N</fullName>
        <ecNumber evidence="1">7.1.1.-</ecNumber>
    </recommendedName>
    <alternativeName>
        <fullName evidence="1">NAD(P)H dehydrogenase I subunit N</fullName>
        <shortName evidence="1">NDH-1 subunit N</shortName>
        <shortName evidence="1">NDH-N</shortName>
    </alternativeName>
</protein>
<dbReference type="EC" id="7.1.1.-" evidence="1"/>
<dbReference type="EMBL" id="AP009552">
    <property type="protein sequence ID" value="BAG05090.1"/>
    <property type="molecule type" value="Genomic_DNA"/>
</dbReference>
<dbReference type="RefSeq" id="WP_002747620.1">
    <property type="nucleotide sequence ID" value="NC_010296.1"/>
</dbReference>
<dbReference type="SMR" id="B0JY52"/>
<dbReference type="STRING" id="449447.MAE_52680"/>
<dbReference type="PaxDb" id="449447-MAE_52680"/>
<dbReference type="EnsemblBacteria" id="BAG05090">
    <property type="protein sequence ID" value="BAG05090"/>
    <property type="gene ID" value="MAE_52680"/>
</dbReference>
<dbReference type="KEGG" id="mar:MAE_52680"/>
<dbReference type="eggNOG" id="ENOG502ZBMI">
    <property type="taxonomic scope" value="Bacteria"/>
</dbReference>
<dbReference type="HOGENOM" id="CLU_087432_0_0_3"/>
<dbReference type="BioCyc" id="MAER449447:MAE_RS22915-MONOMER"/>
<dbReference type="Proteomes" id="UP000001510">
    <property type="component" value="Chromosome"/>
</dbReference>
<dbReference type="GO" id="GO:0031676">
    <property type="term" value="C:plasma membrane-derived thylakoid membrane"/>
    <property type="evidence" value="ECO:0007669"/>
    <property type="project" value="UniProtKB-SubCell"/>
</dbReference>
<dbReference type="GO" id="GO:0016655">
    <property type="term" value="F:oxidoreductase activity, acting on NAD(P)H, quinone or similar compound as acceptor"/>
    <property type="evidence" value="ECO:0007669"/>
    <property type="project" value="UniProtKB-UniRule"/>
</dbReference>
<dbReference type="GO" id="GO:0048038">
    <property type="term" value="F:quinone binding"/>
    <property type="evidence" value="ECO:0007669"/>
    <property type="project" value="UniProtKB-KW"/>
</dbReference>
<dbReference type="HAMAP" id="MF_01353">
    <property type="entry name" value="NDH1_NDH1N"/>
    <property type="match status" value="1"/>
</dbReference>
<dbReference type="InterPro" id="IPR020874">
    <property type="entry name" value="NAD(P)H-quinone_OxRdtase_su_N"/>
</dbReference>
<dbReference type="PANTHER" id="PTHR35515">
    <property type="entry name" value="NAD(P)H-QUINONE OXIDOREDUCTASE SUBUNIT N, CHLOROPLASTIC"/>
    <property type="match status" value="1"/>
</dbReference>
<dbReference type="PANTHER" id="PTHR35515:SF1">
    <property type="entry name" value="NAD(P)H-QUINONE OXIDOREDUCTASE SUBUNIT N, CHLOROPLASTIC"/>
    <property type="match status" value="1"/>
</dbReference>
<dbReference type="Pfam" id="PF11909">
    <property type="entry name" value="NdhN"/>
    <property type="match status" value="1"/>
</dbReference>
<comment type="function">
    <text evidence="1">NDH-1 shuttles electrons from an unknown electron donor, via FMN and iron-sulfur (Fe-S) centers, to quinones in the respiratory and/or the photosynthetic chain. The immediate electron acceptor for the enzyme in this species is believed to be plastoquinone. Couples the redox reaction to proton translocation, and thus conserves the redox energy in a proton gradient. Cyanobacterial NDH-1 also plays a role in inorganic carbon-concentration.</text>
</comment>
<comment type="catalytic activity">
    <reaction evidence="1">
        <text>a plastoquinone + NADH + (n+1) H(+)(in) = a plastoquinol + NAD(+) + n H(+)(out)</text>
        <dbReference type="Rhea" id="RHEA:42608"/>
        <dbReference type="Rhea" id="RHEA-COMP:9561"/>
        <dbReference type="Rhea" id="RHEA-COMP:9562"/>
        <dbReference type="ChEBI" id="CHEBI:15378"/>
        <dbReference type="ChEBI" id="CHEBI:17757"/>
        <dbReference type="ChEBI" id="CHEBI:57540"/>
        <dbReference type="ChEBI" id="CHEBI:57945"/>
        <dbReference type="ChEBI" id="CHEBI:62192"/>
    </reaction>
</comment>
<comment type="catalytic activity">
    <reaction evidence="1">
        <text>a plastoquinone + NADPH + (n+1) H(+)(in) = a plastoquinol + NADP(+) + n H(+)(out)</text>
        <dbReference type="Rhea" id="RHEA:42612"/>
        <dbReference type="Rhea" id="RHEA-COMP:9561"/>
        <dbReference type="Rhea" id="RHEA-COMP:9562"/>
        <dbReference type="ChEBI" id="CHEBI:15378"/>
        <dbReference type="ChEBI" id="CHEBI:17757"/>
        <dbReference type="ChEBI" id="CHEBI:57783"/>
        <dbReference type="ChEBI" id="CHEBI:58349"/>
        <dbReference type="ChEBI" id="CHEBI:62192"/>
    </reaction>
</comment>
<comment type="subunit">
    <text evidence="1">NDH-1 can be composed of about 15 different subunits; different subcomplexes with different compositions have been identified which probably have different functions.</text>
</comment>
<comment type="subcellular location">
    <subcellularLocation>
        <location evidence="1">Cellular thylakoid membrane</location>
        <topology evidence="1">Peripheral membrane protein</topology>
        <orientation evidence="1">Cytoplasmic side</orientation>
    </subcellularLocation>
</comment>
<comment type="similarity">
    <text evidence="1">Belongs to the complex I NdhN subunit family.</text>
</comment>
<proteinExistence type="inferred from homology"/>
<name>NDHN_MICAN</name>
<sequence length="158" mass="17699">MALLTTGKPFIRDLEQYGALGVYAPLEGGYEGRYQRRLRATGYNVLHITARGLGDLSAYLTGIHGVRPPHLGKKNIGREAAVGPVYFIPPIATYQLENLPPKSKGLVIWIIESFVLSSEEKQYLINLSQQEPRLKFVLELGGERYFRWQPLSKSLIAA</sequence>
<gene>
    <name evidence="1" type="primary">ndhN</name>
    <name type="ordered locus">MAE_52680</name>
</gene>
<accession>B0JY52</accession>